<comment type="similarity">
    <text evidence="2">Belongs to the UPF0507 family.</text>
</comment>
<protein>
    <recommendedName>
        <fullName>UPF0507 protein SCY_4172</fullName>
    </recommendedName>
</protein>
<evidence type="ECO:0000255" key="1">
    <source>
        <dbReference type="PROSITE-ProRule" id="PRU00550"/>
    </source>
</evidence>
<evidence type="ECO:0000305" key="2"/>
<organism>
    <name type="scientific">Saccharomyces cerevisiae (strain YJM789)</name>
    <name type="common">Baker's yeast</name>
    <dbReference type="NCBI Taxonomy" id="307796"/>
    <lineage>
        <taxon>Eukaryota</taxon>
        <taxon>Fungi</taxon>
        <taxon>Dikarya</taxon>
        <taxon>Ascomycota</taxon>
        <taxon>Saccharomycotina</taxon>
        <taxon>Saccharomycetes</taxon>
        <taxon>Saccharomycetales</taxon>
        <taxon>Saccharomycetaceae</taxon>
        <taxon>Saccharomyces</taxon>
    </lineage>
</organism>
<accession>A6ZM60</accession>
<dbReference type="EMBL" id="AAFW02000020">
    <property type="protein sequence ID" value="EDN64390.1"/>
    <property type="molecule type" value="Genomic_DNA"/>
</dbReference>
<dbReference type="SMR" id="A6ZM60"/>
<dbReference type="HOGENOM" id="CLU_008912_0_0_1"/>
<dbReference type="OrthoDB" id="35970at4893"/>
<dbReference type="Proteomes" id="UP000007060">
    <property type="component" value="Unassembled WGS sequence"/>
</dbReference>
<dbReference type="GO" id="GO:0005769">
    <property type="term" value="C:early endosome"/>
    <property type="evidence" value="ECO:0007669"/>
    <property type="project" value="TreeGrafter"/>
</dbReference>
<dbReference type="GO" id="GO:0005770">
    <property type="term" value="C:late endosome"/>
    <property type="evidence" value="ECO:0007669"/>
    <property type="project" value="TreeGrafter"/>
</dbReference>
<dbReference type="GO" id="GO:0005886">
    <property type="term" value="C:plasma membrane"/>
    <property type="evidence" value="ECO:0007669"/>
    <property type="project" value="TreeGrafter"/>
</dbReference>
<dbReference type="GO" id="GO:0030133">
    <property type="term" value="C:transport vesicle"/>
    <property type="evidence" value="ECO:0007669"/>
    <property type="project" value="TreeGrafter"/>
</dbReference>
<dbReference type="GO" id="GO:0097422">
    <property type="term" value="C:tubular endosome"/>
    <property type="evidence" value="ECO:0007669"/>
    <property type="project" value="TreeGrafter"/>
</dbReference>
<dbReference type="GO" id="GO:0005085">
    <property type="term" value="F:guanyl-nucleotide exchange factor activity"/>
    <property type="evidence" value="ECO:0007669"/>
    <property type="project" value="TreeGrafter"/>
</dbReference>
<dbReference type="GO" id="GO:0000149">
    <property type="term" value="F:SNARE binding"/>
    <property type="evidence" value="ECO:0007669"/>
    <property type="project" value="TreeGrafter"/>
</dbReference>
<dbReference type="GO" id="GO:0045022">
    <property type="term" value="P:early endosome to late endosome transport"/>
    <property type="evidence" value="ECO:0007669"/>
    <property type="project" value="TreeGrafter"/>
</dbReference>
<dbReference type="Gene3D" id="1.25.40.20">
    <property type="entry name" value="Ankyrin repeat-containing domain"/>
    <property type="match status" value="1"/>
</dbReference>
<dbReference type="Gene3D" id="1.20.1050.80">
    <property type="entry name" value="VPS9 domain"/>
    <property type="match status" value="1"/>
</dbReference>
<dbReference type="InterPro" id="IPR036770">
    <property type="entry name" value="Ankyrin_rpt-contain_sf"/>
</dbReference>
<dbReference type="InterPro" id="IPR051248">
    <property type="entry name" value="UPF0507/Ank_repeat_27"/>
</dbReference>
<dbReference type="InterPro" id="IPR003123">
    <property type="entry name" value="VPS9"/>
</dbReference>
<dbReference type="InterPro" id="IPR037191">
    <property type="entry name" value="VPS9_dom_sf"/>
</dbReference>
<dbReference type="PANTHER" id="PTHR24170">
    <property type="entry name" value="ANKYRIN REPEAT DOMAIN-CONTAINING PROTEIN 27"/>
    <property type="match status" value="1"/>
</dbReference>
<dbReference type="PANTHER" id="PTHR24170:SF1">
    <property type="entry name" value="DOMAIN PROTEIN, PUTATIVE (AFU_ORTHOLOGUE AFUA_1G09870)-RELATED"/>
    <property type="match status" value="1"/>
</dbReference>
<dbReference type="Pfam" id="PF02204">
    <property type="entry name" value="VPS9"/>
    <property type="match status" value="1"/>
</dbReference>
<dbReference type="SUPFAM" id="SSF140860">
    <property type="entry name" value="Pseudo ankyrin repeat-like"/>
    <property type="match status" value="1"/>
</dbReference>
<dbReference type="SUPFAM" id="SSF109993">
    <property type="entry name" value="VPS9 domain"/>
    <property type="match status" value="1"/>
</dbReference>
<dbReference type="PROSITE" id="PS51205">
    <property type="entry name" value="VPS9"/>
    <property type="match status" value="1"/>
</dbReference>
<gene>
    <name type="ORF">SCY_4172</name>
</gene>
<reference key="1">
    <citation type="journal article" date="2007" name="Proc. Natl. Acad. Sci. U.S.A.">
        <title>Genome sequencing and comparative analysis of Saccharomyces cerevisiae strain YJM789.</title>
        <authorList>
            <person name="Wei W."/>
            <person name="McCusker J.H."/>
            <person name="Hyman R.W."/>
            <person name="Jones T."/>
            <person name="Ning Y."/>
            <person name="Cao Z."/>
            <person name="Gu Z."/>
            <person name="Bruno D."/>
            <person name="Miranda M."/>
            <person name="Nguyen M."/>
            <person name="Wilhelmy J."/>
            <person name="Komp C."/>
            <person name="Tamse R."/>
            <person name="Wang X."/>
            <person name="Jia P."/>
            <person name="Luedi P."/>
            <person name="Oefner P.J."/>
            <person name="David L."/>
            <person name="Dietrich F.S."/>
            <person name="Li Y."/>
            <person name="Davis R.W."/>
            <person name="Steinmetz L.M."/>
        </authorList>
    </citation>
    <scope>NUCLEOTIDE SEQUENCE [LARGE SCALE GENOMIC DNA]</scope>
    <source>
        <strain>YJM789</strain>
    </source>
</reference>
<sequence length="1090" mass="125977">MSVYHLPTLLNPLVNAIFNCPEPERSPLKKLFANLKTRRFILLAPPSEYLLNYHDVKSKLPLHDLCYNAEFINSYILLMTENSYINTNSRDSHYETLDGKTVVIQWKNNVIHALNGFHIRRRLKILETKILPNFNDYFEGAADFIILFIDQPLNCEFVPNDYLQCFHNYEKIPKNAHAMPNLSIDSFQQERSSFENILHIHPARLTQLGQLFSSYRTLAPGDDPSRSIFESIVQQAFDGMKSDSLFKNFSNLYDLIHDYFELNLYDDIWSRLTTHFKGHEVDTEKYKYFSVNQLLTDFYSKDYGEFKLHDITLIERRLHLASKHLQKLALTHSYAEKSKILVETLQKLSGTTEMDSHQLELPDGLNNMTMDADTLISLFVLVVCRSEQKHLKSHLYYLQNFSNNSSSTKFGILGYAVSTLEAVVCYFEDFNKNTGNVAKANTLCEKTKNLLDKLSCENPTNEIEDLATYKDILTYRNEQGQSILSICITNHKNYILLDILSEYENDFPVEDLLEDETIDGSTLLIESIKAGNLEAAKVLIKIMLFNCTEEELVSYINKTDKYARTVAHYLTHEMDILKSIGNYIDWKRKNSSGQTPLFSIFRSYDQPNYEEMVKTAFDIANTWYRKHNSLFDYLDHTDNKGNSLLHVLKTNIPILLQLTKLDINEENYKGLTPLMVYVKYKRLSNIDAITKDHRLILEKVQNSTFFTCFDYAKDHSVLSKIGERGVKDSLFGLIYFHSLRYHNLNATTNITSVSNAEKPFATTVINMKTIQGLLRSILKDNPFTFLPLNTYIDEISHLNRSDLTIIGKTDVTSLLHQLTNCFNVLLFLKKIPENLFTDEASILYWMRINTSKRNQKPSGKENPKTMEPEEINMIQSFLRFNFDEISSFKASLNILRKVLIFINLKSDDFEDAYKGLNEMGRKLINSEASSAFKGIITNHNMFSELSLAELLENVRFLEQCTIQLSSFVQIILFEKIPNWWKHYGEFLALHKSYRKAFPNMVKPKSASDTSSRAPLGGFIETKREQSEQRLAVQIKASSKMLKELGSEIFVAHERLAEELSNYMEFRKACLDQRSLVAFATTNISVLQECV</sequence>
<name>U507_YEAS7</name>
<feature type="chain" id="PRO_0000311658" description="UPF0507 protein SCY_4172">
    <location>
        <begin position="1"/>
        <end position="1090"/>
    </location>
</feature>
<feature type="domain" description="VPS9" evidence="1">
    <location>
        <begin position="289"/>
        <end position="436"/>
    </location>
</feature>
<proteinExistence type="inferred from homology"/>